<comment type="function">
    <text evidence="1">One of the primary rRNA binding proteins, it binds directly to 16S rRNA central domain where it helps coordinate assembly of the platform of the 30S subunit.</text>
</comment>
<comment type="subunit">
    <text evidence="1">Part of the 30S ribosomal subunit. Contacts proteins S5 and S12.</text>
</comment>
<comment type="similarity">
    <text evidence="1">Belongs to the universal ribosomal protein uS8 family.</text>
</comment>
<sequence length="132" mass="14233">MSMTDPIADLLVRIKNAAAVGKPTVKLPSSKIKVAIAQVLKDEGYITDLRVTATENNKSELEIVLKYFEGRPVIETLKRFSRSGLRQYRGKTELPKVLGGLGIAIISTSKGIMTDAQAREAGVGGEVLCFVA</sequence>
<reference key="1">
    <citation type="journal article" date="2005" name="Nucleic Acids Res.">
        <title>The genome sequence of Xanthomonas oryzae pathovar oryzae KACC10331, the bacterial blight pathogen of rice.</title>
        <authorList>
            <person name="Lee B.-M."/>
            <person name="Park Y.-J."/>
            <person name="Park D.-S."/>
            <person name="Kang H.-W."/>
            <person name="Kim J.-G."/>
            <person name="Song E.-S."/>
            <person name="Park I.-C."/>
            <person name="Yoon U.-H."/>
            <person name="Hahn J.-H."/>
            <person name="Koo B.-S."/>
            <person name="Lee G.-B."/>
            <person name="Kim H."/>
            <person name="Park H.-S."/>
            <person name="Yoon K.-O."/>
            <person name="Kim J.-H."/>
            <person name="Jung C.-H."/>
            <person name="Koh N.-H."/>
            <person name="Seo J.-S."/>
            <person name="Go S.-J."/>
        </authorList>
    </citation>
    <scope>NUCLEOTIDE SEQUENCE [LARGE SCALE GENOMIC DNA]</scope>
    <source>
        <strain>KACC10331 / KXO85</strain>
    </source>
</reference>
<protein>
    <recommendedName>
        <fullName evidence="1">Small ribosomal subunit protein uS8</fullName>
    </recommendedName>
    <alternativeName>
        <fullName evidence="2">30S ribosomal protein S8</fullName>
    </alternativeName>
</protein>
<name>RS8_XANOR</name>
<organism>
    <name type="scientific">Xanthomonas oryzae pv. oryzae (strain KACC10331 / KXO85)</name>
    <dbReference type="NCBI Taxonomy" id="291331"/>
    <lineage>
        <taxon>Bacteria</taxon>
        <taxon>Pseudomonadati</taxon>
        <taxon>Pseudomonadota</taxon>
        <taxon>Gammaproteobacteria</taxon>
        <taxon>Lysobacterales</taxon>
        <taxon>Lysobacteraceae</taxon>
        <taxon>Xanthomonas</taxon>
    </lineage>
</organism>
<accession>Q05HS7</accession>
<proteinExistence type="inferred from homology"/>
<keyword id="KW-1185">Reference proteome</keyword>
<keyword id="KW-0687">Ribonucleoprotein</keyword>
<keyword id="KW-0689">Ribosomal protein</keyword>
<keyword id="KW-0694">RNA-binding</keyword>
<keyword id="KW-0699">rRNA-binding</keyword>
<feature type="chain" id="PRO_0000290960" description="Small ribosomal subunit protein uS8">
    <location>
        <begin position="1"/>
        <end position="132"/>
    </location>
</feature>
<dbReference type="EMBL" id="AE013598">
    <property type="protein sequence ID" value="ABJ90007.1"/>
    <property type="molecule type" value="Genomic_DNA"/>
</dbReference>
<dbReference type="SMR" id="Q05HS7"/>
<dbReference type="STRING" id="291331.XOO4896"/>
<dbReference type="KEGG" id="xoo:XOO4896"/>
<dbReference type="HOGENOM" id="CLU_098428_0_0_6"/>
<dbReference type="Proteomes" id="UP000006735">
    <property type="component" value="Chromosome"/>
</dbReference>
<dbReference type="GO" id="GO:1990904">
    <property type="term" value="C:ribonucleoprotein complex"/>
    <property type="evidence" value="ECO:0007669"/>
    <property type="project" value="UniProtKB-KW"/>
</dbReference>
<dbReference type="GO" id="GO:0005840">
    <property type="term" value="C:ribosome"/>
    <property type="evidence" value="ECO:0007669"/>
    <property type="project" value="UniProtKB-KW"/>
</dbReference>
<dbReference type="GO" id="GO:0019843">
    <property type="term" value="F:rRNA binding"/>
    <property type="evidence" value="ECO:0007669"/>
    <property type="project" value="UniProtKB-UniRule"/>
</dbReference>
<dbReference type="GO" id="GO:0003735">
    <property type="term" value="F:structural constituent of ribosome"/>
    <property type="evidence" value="ECO:0007669"/>
    <property type="project" value="InterPro"/>
</dbReference>
<dbReference type="GO" id="GO:0006412">
    <property type="term" value="P:translation"/>
    <property type="evidence" value="ECO:0007669"/>
    <property type="project" value="UniProtKB-UniRule"/>
</dbReference>
<dbReference type="FunFam" id="3.30.1370.30:FF:000002">
    <property type="entry name" value="30S ribosomal protein S8"/>
    <property type="match status" value="1"/>
</dbReference>
<dbReference type="FunFam" id="3.30.1490.10:FF:000001">
    <property type="entry name" value="30S ribosomal protein S8"/>
    <property type="match status" value="1"/>
</dbReference>
<dbReference type="Gene3D" id="3.30.1370.30">
    <property type="match status" value="1"/>
</dbReference>
<dbReference type="Gene3D" id="3.30.1490.10">
    <property type="match status" value="1"/>
</dbReference>
<dbReference type="HAMAP" id="MF_01302_B">
    <property type="entry name" value="Ribosomal_uS8_B"/>
    <property type="match status" value="1"/>
</dbReference>
<dbReference type="InterPro" id="IPR000630">
    <property type="entry name" value="Ribosomal_uS8"/>
</dbReference>
<dbReference type="InterPro" id="IPR047863">
    <property type="entry name" value="Ribosomal_uS8_CS"/>
</dbReference>
<dbReference type="InterPro" id="IPR035987">
    <property type="entry name" value="Ribosomal_uS8_sf"/>
</dbReference>
<dbReference type="NCBIfam" id="NF001109">
    <property type="entry name" value="PRK00136.1"/>
    <property type="match status" value="1"/>
</dbReference>
<dbReference type="PANTHER" id="PTHR11758">
    <property type="entry name" value="40S RIBOSOMAL PROTEIN S15A"/>
    <property type="match status" value="1"/>
</dbReference>
<dbReference type="Pfam" id="PF00410">
    <property type="entry name" value="Ribosomal_S8"/>
    <property type="match status" value="1"/>
</dbReference>
<dbReference type="SUPFAM" id="SSF56047">
    <property type="entry name" value="Ribosomal protein S8"/>
    <property type="match status" value="1"/>
</dbReference>
<dbReference type="PROSITE" id="PS00053">
    <property type="entry name" value="RIBOSOMAL_S8"/>
    <property type="match status" value="1"/>
</dbReference>
<gene>
    <name evidence="1" type="primary">rpsH</name>
    <name type="ordered locus">XOO4896</name>
</gene>
<evidence type="ECO:0000255" key="1">
    <source>
        <dbReference type="HAMAP-Rule" id="MF_01302"/>
    </source>
</evidence>
<evidence type="ECO:0000305" key="2"/>